<accession>P46961</accession>
<accession>D6W3U0</accession>
<accession>P48014</accession>
<sequence length="280" mass="32577">MTRSPWKRLLWLKQEYPDNYTDPSFIELRARQKAESNQKSDRKLSEAARAQIRLDFISFYQTILNTSFIYITFTYIYYYGFDPIPPTIFLSFITLIISRTKVDPLLSSFMDVKSSLIITFAMLTLSPVLKSLSKTTASDSIWTLSFWLTLWYIFVISSTKSKDKPSNLSTNILVALVAVLSSRLSTTIDVFCFLLICIQLNIILPTYLSVTNKVVPIISNIIVYSFLNVALGWIYMLLIFFASVFYITVLPKWFIYWKINYHKRDNDLLSTWDARTPILD</sequence>
<dbReference type="EC" id="2.4.1.198"/>
<dbReference type="EMBL" id="U23788">
    <property type="protein sequence ID" value="AAA79518.1"/>
    <property type="status" value="ALT_FRAME"/>
    <property type="molecule type" value="Genomic_DNA"/>
</dbReference>
<dbReference type="EMBL" id="D29645">
    <property type="protein sequence ID" value="BAA06128.1"/>
    <property type="molecule type" value="Genomic_DNA"/>
</dbReference>
<dbReference type="EMBL" id="U41849">
    <property type="protein sequence ID" value="AAB68262.1"/>
    <property type="molecule type" value="Genomic_DNA"/>
</dbReference>
<dbReference type="EMBL" id="AY692961">
    <property type="protein sequence ID" value="AAT92980.1"/>
    <property type="molecule type" value="Genomic_DNA"/>
</dbReference>
<dbReference type="EMBL" id="BK006949">
    <property type="protein sequence ID" value="DAA11356.1"/>
    <property type="molecule type" value="Genomic_DNA"/>
</dbReference>
<dbReference type="PIR" id="S61111">
    <property type="entry name" value="S61111"/>
</dbReference>
<dbReference type="RefSeq" id="NP_015249.1">
    <property type="nucleotide sequence ID" value="NM_001183890.1"/>
</dbReference>
<dbReference type="BioGRID" id="36104">
    <property type="interactions" value="603"/>
</dbReference>
<dbReference type="ComplexPortal" id="CPX-1274">
    <property type="entry name" value="Glycosylphosphatidylinositol-N-acetylglucosaminyltransferase complex"/>
</dbReference>
<dbReference type="DIP" id="DIP-4023N"/>
<dbReference type="FunCoup" id="P46961">
    <property type="interactions" value="659"/>
</dbReference>
<dbReference type="IntAct" id="P46961">
    <property type="interactions" value="17"/>
</dbReference>
<dbReference type="MINT" id="P46961"/>
<dbReference type="STRING" id="4932.YPL076W"/>
<dbReference type="PaxDb" id="4932-YPL076W"/>
<dbReference type="PeptideAtlas" id="P46961"/>
<dbReference type="EnsemblFungi" id="YPL076W_mRNA">
    <property type="protein sequence ID" value="YPL076W"/>
    <property type="gene ID" value="YPL076W"/>
</dbReference>
<dbReference type="GeneID" id="856029"/>
<dbReference type="KEGG" id="sce:YPL076W"/>
<dbReference type="AGR" id="SGD:S000005997"/>
<dbReference type="SGD" id="S000005997">
    <property type="gene designation" value="GPI2"/>
</dbReference>
<dbReference type="VEuPathDB" id="FungiDB:YPL076W"/>
<dbReference type="eggNOG" id="KOG3059">
    <property type="taxonomic scope" value="Eukaryota"/>
</dbReference>
<dbReference type="GeneTree" id="ENSGT00390000005496"/>
<dbReference type="HOGENOM" id="CLU_024002_2_0_1"/>
<dbReference type="InParanoid" id="P46961"/>
<dbReference type="OMA" id="STSYHAF"/>
<dbReference type="OrthoDB" id="196709at2759"/>
<dbReference type="BioCyc" id="YEAST:G3O-33983-MONOMER"/>
<dbReference type="UniPathway" id="UPA00196"/>
<dbReference type="BioGRID-ORCS" id="856029">
    <property type="hits" value="4 hits in 10 CRISPR screens"/>
</dbReference>
<dbReference type="PRO" id="PR:P46961"/>
<dbReference type="Proteomes" id="UP000002311">
    <property type="component" value="Chromosome XVI"/>
</dbReference>
<dbReference type="RNAct" id="P46961">
    <property type="molecule type" value="protein"/>
</dbReference>
<dbReference type="GO" id="GO:0005783">
    <property type="term" value="C:endoplasmic reticulum"/>
    <property type="evidence" value="ECO:0007005"/>
    <property type="project" value="SGD"/>
</dbReference>
<dbReference type="GO" id="GO:0005789">
    <property type="term" value="C:endoplasmic reticulum membrane"/>
    <property type="evidence" value="ECO:0000303"/>
    <property type="project" value="ComplexPortal"/>
</dbReference>
<dbReference type="GO" id="GO:0000506">
    <property type="term" value="C:glycosylphosphatidylinositol-N-acetylglucosaminyltransferase (GPI-GnT) complex"/>
    <property type="evidence" value="ECO:0000353"/>
    <property type="project" value="SGD"/>
</dbReference>
<dbReference type="GO" id="GO:0017176">
    <property type="term" value="F:phosphatidylinositol N-acetylglucosaminyltransferase activity"/>
    <property type="evidence" value="ECO:0000305"/>
    <property type="project" value="SGD"/>
</dbReference>
<dbReference type="GO" id="GO:0031505">
    <property type="term" value="P:fungal-type cell wall organization"/>
    <property type="evidence" value="ECO:0000303"/>
    <property type="project" value="ComplexPortal"/>
</dbReference>
<dbReference type="GO" id="GO:0006506">
    <property type="term" value="P:GPI anchor biosynthetic process"/>
    <property type="evidence" value="ECO:0000314"/>
    <property type="project" value="SGD"/>
</dbReference>
<dbReference type="InterPro" id="IPR009450">
    <property type="entry name" value="Plno_GlcNAc_GPI2"/>
</dbReference>
<dbReference type="PANTHER" id="PTHR12982">
    <property type="entry name" value="PHOSPHATIDYLINOSITOL GLYCAN, CLASS C"/>
    <property type="match status" value="1"/>
</dbReference>
<dbReference type="PANTHER" id="PTHR12982:SF0">
    <property type="entry name" value="PHOSPHATIDYLINOSITOL N-ACETYLGLUCOSAMINYLTRANSFERASE SUBUNIT C"/>
    <property type="match status" value="1"/>
</dbReference>
<dbReference type="Pfam" id="PF06432">
    <property type="entry name" value="GPI2"/>
    <property type="match status" value="1"/>
</dbReference>
<dbReference type="PIRSF" id="PIRSF016104">
    <property type="entry name" value="GPI2"/>
    <property type="match status" value="1"/>
</dbReference>
<proteinExistence type="evidence at protein level"/>
<feature type="chain" id="PRO_0000087558" description="Phosphatidylinositol N-acetylglucosaminyltransferase GPI2 subunit">
    <location>
        <begin position="1"/>
        <end position="280"/>
    </location>
</feature>
<feature type="topological domain" description="Cytoplasmic" evidence="1">
    <location>
        <begin position="1"/>
        <end position="53"/>
    </location>
</feature>
<feature type="transmembrane region" description="Helical" evidence="1">
    <location>
        <begin position="54"/>
        <end position="74"/>
    </location>
</feature>
<feature type="topological domain" description="Extracellular" evidence="1">
    <location>
        <position position="75"/>
    </location>
</feature>
<feature type="transmembrane region" description="Helical" evidence="1">
    <location>
        <begin position="76"/>
        <end position="96"/>
    </location>
</feature>
<feature type="topological domain" description="Cytoplasmic" evidence="1">
    <location>
        <begin position="97"/>
        <end position="108"/>
    </location>
</feature>
<feature type="transmembrane region" description="Helical" evidence="1">
    <location>
        <begin position="109"/>
        <end position="129"/>
    </location>
</feature>
<feature type="topological domain" description="Extracellular" evidence="1">
    <location>
        <begin position="130"/>
        <end position="135"/>
    </location>
</feature>
<feature type="transmembrane region" description="Helical" evidence="1">
    <location>
        <begin position="136"/>
        <end position="156"/>
    </location>
</feature>
<feature type="topological domain" description="Cytoplasmic" evidence="1">
    <location>
        <begin position="157"/>
        <end position="189"/>
    </location>
</feature>
<feature type="transmembrane region" description="Helical" evidence="1">
    <location>
        <begin position="190"/>
        <end position="210"/>
    </location>
</feature>
<feature type="topological domain" description="Extracellular" evidence="1">
    <location>
        <begin position="211"/>
        <end position="220"/>
    </location>
</feature>
<feature type="transmembrane region" description="Helical" evidence="1">
    <location>
        <begin position="221"/>
        <end position="241"/>
    </location>
</feature>
<feature type="topological domain" description="Cytoplasmic" evidence="1">
    <location>
        <begin position="242"/>
        <end position="280"/>
    </location>
</feature>
<feature type="sequence conflict" description="In Ref. 1; AAA79518." evidence="4" ref="1">
    <original>A</original>
    <variation>R</variation>
    <location>
        <position position="48"/>
    </location>
</feature>
<keyword id="KW-0328">Glycosyltransferase</keyword>
<keyword id="KW-0337">GPI-anchor biosynthesis</keyword>
<keyword id="KW-0472">Membrane</keyword>
<keyword id="KW-1185">Reference proteome</keyword>
<keyword id="KW-0808">Transferase</keyword>
<keyword id="KW-0812">Transmembrane</keyword>
<keyword id="KW-1133">Transmembrane helix</keyword>
<organism>
    <name type="scientific">Saccharomyces cerevisiae (strain ATCC 204508 / S288c)</name>
    <name type="common">Baker's yeast</name>
    <dbReference type="NCBI Taxonomy" id="559292"/>
    <lineage>
        <taxon>Eukaryota</taxon>
        <taxon>Fungi</taxon>
        <taxon>Dikarya</taxon>
        <taxon>Ascomycota</taxon>
        <taxon>Saccharomycotina</taxon>
        <taxon>Saccharomycetes</taxon>
        <taxon>Saccharomycetales</taxon>
        <taxon>Saccharomycetaceae</taxon>
        <taxon>Saccharomyces</taxon>
    </lineage>
</organism>
<comment type="function">
    <text evidence="3">Part of the complex catalyzing the transfer of N-acetylglucosamine from UDP-N-acetylglucosamine to phosphatidylinositol, the first step of GPI biosynthesis.</text>
</comment>
<comment type="catalytic activity">
    <reaction>
        <text>a 1,2-diacyl-sn-glycero-3-phospho-(1D-myo-inositol) + UDP-N-acetyl-alpha-D-glucosamine = a 6-(N-acetyl-alpha-D-glucosaminyl)-1-(1,2-diacyl-sn-glycero-3-phospho)-1D-myo-inositol + UDP + H(+)</text>
        <dbReference type="Rhea" id="RHEA:14789"/>
        <dbReference type="ChEBI" id="CHEBI:15378"/>
        <dbReference type="ChEBI" id="CHEBI:57265"/>
        <dbReference type="ChEBI" id="CHEBI:57705"/>
        <dbReference type="ChEBI" id="CHEBI:57880"/>
        <dbReference type="ChEBI" id="CHEBI:58223"/>
        <dbReference type="EC" id="2.4.1.198"/>
    </reaction>
</comment>
<comment type="pathway">
    <text evidence="6">Glycolipid biosynthesis; glycosylphosphatidylinositol-anchor biosynthesis.</text>
</comment>
<comment type="subunit">
    <text evidence="2 5">Component of the phosphatidylinositol N-acetylglucosaminyltransferase (GPI-GlcNAc transferase) complex composed of at least GPI1, GPI2, GPI3, GPI15, GPI19 and ERI1 (Probable). Interacts with ERI1 (PubMed:15163411).</text>
</comment>
<comment type="subcellular location">
    <subcellularLocation>
        <location evidence="4">Membrane</location>
        <topology evidence="4">Multi-pass membrane protein</topology>
    </subcellularLocation>
</comment>
<comment type="similarity">
    <text evidence="4">Belongs to the PIGC family.</text>
</comment>
<comment type="sequence caution" evidence="4">
    <conflict type="frameshift">
        <sequence resource="EMBL-CDS" id="AAA79518"/>
    </conflict>
</comment>
<protein>
    <recommendedName>
        <fullName>Phosphatidylinositol N-acetylglucosaminyltransferase GPI2 subunit</fullName>
        <shortName>GPI-GlcNAc transferase complex subunit GPI2</shortName>
        <shortName>GPI-GnT subunit GPI2</shortName>
        <ecNumber>2.4.1.198</ecNumber>
    </recommendedName>
</protein>
<gene>
    <name type="primary">GPI2</name>
    <name type="synonym">GCR4</name>
    <name type="ordered locus">YPL076W</name>
    <name type="ORF">LPF9W</name>
</gene>
<name>GPI2_YEAST</name>
<evidence type="ECO:0000255" key="1"/>
<evidence type="ECO:0000269" key="2">
    <source>
    </source>
</evidence>
<evidence type="ECO:0000269" key="3">
    <source>
    </source>
</evidence>
<evidence type="ECO:0000305" key="4"/>
<evidence type="ECO:0000305" key="5">
    <source>
    </source>
</evidence>
<evidence type="ECO:0000305" key="6">
    <source>
    </source>
</evidence>
<reference key="1">
    <citation type="journal article" date="1995" name="J. Biol. Chem.">
        <title>Temperature-sensitive yeast GPI anchoring mutants gpi2 and gpi3 are defective in the synthesis of N-acetylglucosaminyl phosphatidylinositol. Cloning of the GPI2 gene.</title>
        <authorList>
            <person name="Leidich S.D."/>
            <person name="Kostova Z."/>
            <person name="Latek R.R."/>
            <person name="Costello L.C."/>
            <person name="Drapp D.A."/>
            <person name="Gray W."/>
            <person name="Fassler J.S."/>
            <person name="Orlean P."/>
        </authorList>
    </citation>
    <scope>NUCLEOTIDE SEQUENCE [GENOMIC DNA]</scope>
    <scope>FUNCTION</scope>
</reference>
<reference key="2">
    <citation type="journal article" date="1995" name="Yeast">
        <title>A new essential gene GCR4 located in the upstream region of GCR1.</title>
        <authorList>
            <person name="Uemura H."/>
            <person name="Jigami Y."/>
        </authorList>
    </citation>
    <scope>NUCLEOTIDE SEQUENCE [GENOMIC DNA]</scope>
    <source>
        <strain>S288c / GRF88</strain>
    </source>
</reference>
<reference key="3">
    <citation type="journal article" date="1997" name="Nature">
        <title>The nucleotide sequence of Saccharomyces cerevisiae chromosome XVI.</title>
        <authorList>
            <person name="Bussey H."/>
            <person name="Storms R.K."/>
            <person name="Ahmed A."/>
            <person name="Albermann K."/>
            <person name="Allen E."/>
            <person name="Ansorge W."/>
            <person name="Araujo R."/>
            <person name="Aparicio A."/>
            <person name="Barrell B.G."/>
            <person name="Badcock K."/>
            <person name="Benes V."/>
            <person name="Botstein D."/>
            <person name="Bowman S."/>
            <person name="Brueckner M."/>
            <person name="Carpenter J."/>
            <person name="Cherry J.M."/>
            <person name="Chung E."/>
            <person name="Churcher C.M."/>
            <person name="Coster F."/>
            <person name="Davis K."/>
            <person name="Davis R.W."/>
            <person name="Dietrich F.S."/>
            <person name="Delius H."/>
            <person name="DiPaolo T."/>
            <person name="Dubois E."/>
            <person name="Duesterhoeft A."/>
            <person name="Duncan M."/>
            <person name="Floeth M."/>
            <person name="Fortin N."/>
            <person name="Friesen J.D."/>
            <person name="Fritz C."/>
            <person name="Goffeau A."/>
            <person name="Hall J."/>
            <person name="Hebling U."/>
            <person name="Heumann K."/>
            <person name="Hilbert H."/>
            <person name="Hillier L.W."/>
            <person name="Hunicke-Smith S."/>
            <person name="Hyman R.W."/>
            <person name="Johnston M."/>
            <person name="Kalman S."/>
            <person name="Kleine K."/>
            <person name="Komp C."/>
            <person name="Kurdi O."/>
            <person name="Lashkari D."/>
            <person name="Lew H."/>
            <person name="Lin A."/>
            <person name="Lin D."/>
            <person name="Louis E.J."/>
            <person name="Marathe R."/>
            <person name="Messenguy F."/>
            <person name="Mewes H.-W."/>
            <person name="Mirtipati S."/>
            <person name="Moestl D."/>
            <person name="Mueller-Auer S."/>
            <person name="Namath A."/>
            <person name="Nentwich U."/>
            <person name="Oefner P."/>
            <person name="Pearson D."/>
            <person name="Petel F.X."/>
            <person name="Pohl T.M."/>
            <person name="Purnelle B."/>
            <person name="Rajandream M.A."/>
            <person name="Rechmann S."/>
            <person name="Rieger M."/>
            <person name="Riles L."/>
            <person name="Roberts D."/>
            <person name="Schaefer M."/>
            <person name="Scharfe M."/>
            <person name="Scherens B."/>
            <person name="Schramm S."/>
            <person name="Schroeder M."/>
            <person name="Sdicu A.-M."/>
            <person name="Tettelin H."/>
            <person name="Urrestarazu L.A."/>
            <person name="Ushinsky S."/>
            <person name="Vierendeels F."/>
            <person name="Vissers S."/>
            <person name="Voss H."/>
            <person name="Walsh S.V."/>
            <person name="Wambutt R."/>
            <person name="Wang Y."/>
            <person name="Wedler E."/>
            <person name="Wedler H."/>
            <person name="Winnett E."/>
            <person name="Zhong W.-W."/>
            <person name="Zollner A."/>
            <person name="Vo D.H."/>
            <person name="Hani J."/>
        </authorList>
    </citation>
    <scope>NUCLEOTIDE SEQUENCE [LARGE SCALE GENOMIC DNA]</scope>
    <source>
        <strain>ATCC 204508 / S288c</strain>
    </source>
</reference>
<reference key="4">
    <citation type="journal article" date="2014" name="G3 (Bethesda)">
        <title>The reference genome sequence of Saccharomyces cerevisiae: Then and now.</title>
        <authorList>
            <person name="Engel S.R."/>
            <person name="Dietrich F.S."/>
            <person name="Fisk D.G."/>
            <person name="Binkley G."/>
            <person name="Balakrishnan R."/>
            <person name="Costanzo M.C."/>
            <person name="Dwight S.S."/>
            <person name="Hitz B.C."/>
            <person name="Karra K."/>
            <person name="Nash R.S."/>
            <person name="Weng S."/>
            <person name="Wong E.D."/>
            <person name="Lloyd P."/>
            <person name="Skrzypek M.S."/>
            <person name="Miyasato S.R."/>
            <person name="Simison M."/>
            <person name="Cherry J.M."/>
        </authorList>
    </citation>
    <scope>GENOME REANNOTATION</scope>
    <source>
        <strain>ATCC 204508 / S288c</strain>
    </source>
</reference>
<reference key="5">
    <citation type="journal article" date="2007" name="Genome Res.">
        <title>Approaching a complete repository of sequence-verified protein-encoding clones for Saccharomyces cerevisiae.</title>
        <authorList>
            <person name="Hu Y."/>
            <person name="Rolfs A."/>
            <person name="Bhullar B."/>
            <person name="Murthy T.V.S."/>
            <person name="Zhu C."/>
            <person name="Berger M.F."/>
            <person name="Camargo A.A."/>
            <person name="Kelley F."/>
            <person name="McCarron S."/>
            <person name="Jepson D."/>
            <person name="Richardson A."/>
            <person name="Raphael J."/>
            <person name="Moreira D."/>
            <person name="Taycher E."/>
            <person name="Zuo D."/>
            <person name="Mohr S."/>
            <person name="Kane M.F."/>
            <person name="Williamson J."/>
            <person name="Simpson A.J.G."/>
            <person name="Bulyk M.L."/>
            <person name="Harlow E."/>
            <person name="Marsischky G."/>
            <person name="Kolodner R.D."/>
            <person name="LaBaer J."/>
        </authorList>
    </citation>
    <scope>NUCLEOTIDE SEQUENCE [GENOMIC DNA]</scope>
    <source>
        <strain>ATCC 204508 / S288c</strain>
    </source>
</reference>
<reference key="6">
    <citation type="journal article" date="2004" name="Cell">
        <title>Yeast Ras regulates the complex that catalyzes the first step in GPI-anchor biosynthesis at the ER.</title>
        <authorList>
            <person name="Sobering A.K."/>
            <person name="Watanabe R."/>
            <person name="Romeo M.J."/>
            <person name="Yan B.C."/>
            <person name="Specht C.A."/>
            <person name="Orlean P."/>
            <person name="Riezman H."/>
            <person name="Levin D.E."/>
        </authorList>
    </citation>
    <scope>INTERACTION WITH ERI1</scope>
</reference>
<reference key="7">
    <citation type="journal article" date="2006" name="Proc. Natl. Acad. Sci. U.S.A.">
        <title>A global topology map of the Saccharomyces cerevisiae membrane proteome.</title>
        <authorList>
            <person name="Kim H."/>
            <person name="Melen K."/>
            <person name="Oesterberg M."/>
            <person name="von Heijne G."/>
        </authorList>
    </citation>
    <scope>TOPOLOGY [LARGE SCALE ANALYSIS]</scope>
    <source>
        <strain>ATCC 208353 / W303-1A</strain>
    </source>
</reference>